<feature type="chain" id="PRO_1000198077" description="Thiamine-phosphate synthase">
    <location>
        <begin position="1"/>
        <end position="211"/>
    </location>
</feature>
<feature type="binding site" evidence="1">
    <location>
        <begin position="43"/>
        <end position="47"/>
    </location>
    <ligand>
        <name>4-amino-2-methyl-5-(diphosphooxymethyl)pyrimidine</name>
        <dbReference type="ChEBI" id="CHEBI:57841"/>
    </ligand>
</feature>
<feature type="binding site" evidence="1">
    <location>
        <position position="75"/>
    </location>
    <ligand>
        <name>4-amino-2-methyl-5-(diphosphooxymethyl)pyrimidine</name>
        <dbReference type="ChEBI" id="CHEBI:57841"/>
    </ligand>
</feature>
<feature type="binding site" evidence="1">
    <location>
        <position position="76"/>
    </location>
    <ligand>
        <name>Mg(2+)</name>
        <dbReference type="ChEBI" id="CHEBI:18420"/>
    </ligand>
</feature>
<feature type="binding site" evidence="1">
    <location>
        <position position="95"/>
    </location>
    <ligand>
        <name>Mg(2+)</name>
        <dbReference type="ChEBI" id="CHEBI:18420"/>
    </ligand>
</feature>
<feature type="binding site" evidence="1">
    <location>
        <position position="114"/>
    </location>
    <ligand>
        <name>4-amino-2-methyl-5-(diphosphooxymethyl)pyrimidine</name>
        <dbReference type="ChEBI" id="CHEBI:57841"/>
    </ligand>
</feature>
<feature type="binding site" evidence="1">
    <location>
        <begin position="140"/>
        <end position="142"/>
    </location>
    <ligand>
        <name>2-[(2R,5Z)-2-carboxy-4-methylthiazol-5(2H)-ylidene]ethyl phosphate</name>
        <dbReference type="ChEBI" id="CHEBI:62899"/>
    </ligand>
</feature>
<feature type="binding site" evidence="1">
    <location>
        <position position="143"/>
    </location>
    <ligand>
        <name>4-amino-2-methyl-5-(diphosphooxymethyl)pyrimidine</name>
        <dbReference type="ChEBI" id="CHEBI:57841"/>
    </ligand>
</feature>
<feature type="binding site" evidence="1">
    <location>
        <position position="170"/>
    </location>
    <ligand>
        <name>2-[(2R,5Z)-2-carboxy-4-methylthiazol-5(2H)-ylidene]ethyl phosphate</name>
        <dbReference type="ChEBI" id="CHEBI:62899"/>
    </ligand>
</feature>
<feature type="binding site" evidence="1">
    <location>
        <begin position="190"/>
        <end position="191"/>
    </location>
    <ligand>
        <name>2-[(2R,5Z)-2-carboxy-4-methylthiazol-5(2H)-ylidene]ethyl phosphate</name>
        <dbReference type="ChEBI" id="CHEBI:62899"/>
    </ligand>
</feature>
<comment type="function">
    <text evidence="1">Condenses 4-methyl-5-(beta-hydroxyethyl)thiazole monophosphate (THZ-P) and 2-methyl-4-amino-5-hydroxymethyl pyrimidine pyrophosphate (HMP-PP) to form thiamine monophosphate (TMP).</text>
</comment>
<comment type="catalytic activity">
    <reaction evidence="1">
        <text>2-[(2R,5Z)-2-carboxy-4-methylthiazol-5(2H)-ylidene]ethyl phosphate + 4-amino-2-methyl-5-(diphosphooxymethyl)pyrimidine + 2 H(+) = thiamine phosphate + CO2 + diphosphate</text>
        <dbReference type="Rhea" id="RHEA:47844"/>
        <dbReference type="ChEBI" id="CHEBI:15378"/>
        <dbReference type="ChEBI" id="CHEBI:16526"/>
        <dbReference type="ChEBI" id="CHEBI:33019"/>
        <dbReference type="ChEBI" id="CHEBI:37575"/>
        <dbReference type="ChEBI" id="CHEBI:57841"/>
        <dbReference type="ChEBI" id="CHEBI:62899"/>
        <dbReference type="EC" id="2.5.1.3"/>
    </reaction>
</comment>
<comment type="catalytic activity">
    <reaction evidence="1">
        <text>2-(2-carboxy-4-methylthiazol-5-yl)ethyl phosphate + 4-amino-2-methyl-5-(diphosphooxymethyl)pyrimidine + 2 H(+) = thiamine phosphate + CO2 + diphosphate</text>
        <dbReference type="Rhea" id="RHEA:47848"/>
        <dbReference type="ChEBI" id="CHEBI:15378"/>
        <dbReference type="ChEBI" id="CHEBI:16526"/>
        <dbReference type="ChEBI" id="CHEBI:33019"/>
        <dbReference type="ChEBI" id="CHEBI:37575"/>
        <dbReference type="ChEBI" id="CHEBI:57841"/>
        <dbReference type="ChEBI" id="CHEBI:62890"/>
        <dbReference type="EC" id="2.5.1.3"/>
    </reaction>
</comment>
<comment type="catalytic activity">
    <reaction evidence="1">
        <text>4-methyl-5-(2-phosphooxyethyl)-thiazole + 4-amino-2-methyl-5-(diphosphooxymethyl)pyrimidine + H(+) = thiamine phosphate + diphosphate</text>
        <dbReference type="Rhea" id="RHEA:22328"/>
        <dbReference type="ChEBI" id="CHEBI:15378"/>
        <dbReference type="ChEBI" id="CHEBI:33019"/>
        <dbReference type="ChEBI" id="CHEBI:37575"/>
        <dbReference type="ChEBI" id="CHEBI:57841"/>
        <dbReference type="ChEBI" id="CHEBI:58296"/>
        <dbReference type="EC" id="2.5.1.3"/>
    </reaction>
</comment>
<comment type="cofactor">
    <cofactor evidence="1">
        <name>Mg(2+)</name>
        <dbReference type="ChEBI" id="CHEBI:18420"/>
    </cofactor>
    <text evidence="1">Binds 1 Mg(2+) ion per subunit.</text>
</comment>
<comment type="pathway">
    <text evidence="1">Cofactor biosynthesis; thiamine diphosphate biosynthesis; thiamine phosphate from 4-amino-2-methyl-5-diphosphomethylpyrimidine and 4-methyl-5-(2-phosphoethyl)-thiazole: step 1/1.</text>
</comment>
<comment type="similarity">
    <text evidence="1">Belongs to the thiamine-phosphate synthase family.</text>
</comment>
<organism>
    <name type="scientific">Coprothermobacter proteolyticus (strain ATCC 35245 / DSM 5265 / OCM 4 / BT)</name>
    <dbReference type="NCBI Taxonomy" id="309798"/>
    <lineage>
        <taxon>Bacteria</taxon>
        <taxon>Pseudomonadati</taxon>
        <taxon>Coprothermobacterota</taxon>
        <taxon>Coprothermobacteria</taxon>
        <taxon>Coprothermobacterales</taxon>
        <taxon>Coprothermobacteraceae</taxon>
        <taxon>Coprothermobacter</taxon>
    </lineage>
</organism>
<proteinExistence type="inferred from homology"/>
<gene>
    <name evidence="1" type="primary">thiE</name>
    <name type="ordered locus">COPRO5265_0006</name>
</gene>
<reference key="1">
    <citation type="submission" date="2008-08" db="EMBL/GenBank/DDBJ databases">
        <title>The complete genome sequence of Coprothermobacter proteolyticus strain ATCC 5245 / DSM 5265 / BT.</title>
        <authorList>
            <person name="Dodson R.J."/>
            <person name="Durkin A.S."/>
            <person name="Wu M."/>
            <person name="Eisen J."/>
            <person name="Sutton G."/>
        </authorList>
    </citation>
    <scope>NUCLEOTIDE SEQUENCE [LARGE SCALE GENOMIC DNA]</scope>
    <source>
        <strain>ATCC 35245 / DSM 5265 / OCM 4 / BT</strain>
    </source>
</reference>
<accession>B5Y6I1</accession>
<sequence length="211" mass="22194">MVTKEQLKEKLKLYVILDRKLGNGVPLRQQAQLAIAGGATAIQLRDKEMKGRDYYQAALVIKDVCKENNVLFIVNDRLDVALAAEADGVHLGQEDLPLHAAKKLAPPGFIIGISAVNVEQAKLAEKGGADYLGVGDVFGTASKPDAKLTGVDMLKMICQSTSLPCVAIGGINVNNAKIVLDAGAIGIAVISAVVSQKDITGAAKALRELIP</sequence>
<dbReference type="EC" id="2.5.1.3" evidence="1"/>
<dbReference type="EMBL" id="CP001145">
    <property type="protein sequence ID" value="ACI17434.1"/>
    <property type="molecule type" value="Genomic_DNA"/>
</dbReference>
<dbReference type="RefSeq" id="WP_012544086.1">
    <property type="nucleotide sequence ID" value="NC_011295.1"/>
</dbReference>
<dbReference type="SMR" id="B5Y6I1"/>
<dbReference type="STRING" id="309798.COPRO5265_0006"/>
<dbReference type="KEGG" id="cpo:COPRO5265_0006"/>
<dbReference type="eggNOG" id="COG0352">
    <property type="taxonomic scope" value="Bacteria"/>
</dbReference>
<dbReference type="HOGENOM" id="CLU_018272_3_2_9"/>
<dbReference type="OrthoDB" id="9812206at2"/>
<dbReference type="UniPathway" id="UPA00060">
    <property type="reaction ID" value="UER00141"/>
</dbReference>
<dbReference type="Proteomes" id="UP000001732">
    <property type="component" value="Chromosome"/>
</dbReference>
<dbReference type="GO" id="GO:0005737">
    <property type="term" value="C:cytoplasm"/>
    <property type="evidence" value="ECO:0007669"/>
    <property type="project" value="TreeGrafter"/>
</dbReference>
<dbReference type="GO" id="GO:0000287">
    <property type="term" value="F:magnesium ion binding"/>
    <property type="evidence" value="ECO:0007669"/>
    <property type="project" value="UniProtKB-UniRule"/>
</dbReference>
<dbReference type="GO" id="GO:0004789">
    <property type="term" value="F:thiamine-phosphate diphosphorylase activity"/>
    <property type="evidence" value="ECO:0007669"/>
    <property type="project" value="UniProtKB-UniRule"/>
</dbReference>
<dbReference type="GO" id="GO:0009228">
    <property type="term" value="P:thiamine biosynthetic process"/>
    <property type="evidence" value="ECO:0007669"/>
    <property type="project" value="UniProtKB-KW"/>
</dbReference>
<dbReference type="GO" id="GO:0009229">
    <property type="term" value="P:thiamine diphosphate biosynthetic process"/>
    <property type="evidence" value="ECO:0007669"/>
    <property type="project" value="UniProtKB-UniRule"/>
</dbReference>
<dbReference type="CDD" id="cd00564">
    <property type="entry name" value="TMP_TenI"/>
    <property type="match status" value="1"/>
</dbReference>
<dbReference type="FunFam" id="3.20.20.70:FF:000096">
    <property type="entry name" value="Thiamine-phosphate synthase"/>
    <property type="match status" value="1"/>
</dbReference>
<dbReference type="Gene3D" id="3.20.20.70">
    <property type="entry name" value="Aldolase class I"/>
    <property type="match status" value="1"/>
</dbReference>
<dbReference type="HAMAP" id="MF_00097">
    <property type="entry name" value="TMP_synthase"/>
    <property type="match status" value="1"/>
</dbReference>
<dbReference type="InterPro" id="IPR013785">
    <property type="entry name" value="Aldolase_TIM"/>
</dbReference>
<dbReference type="InterPro" id="IPR036206">
    <property type="entry name" value="ThiamineP_synth_sf"/>
</dbReference>
<dbReference type="InterPro" id="IPR022998">
    <property type="entry name" value="ThiamineP_synth_TenI"/>
</dbReference>
<dbReference type="InterPro" id="IPR034291">
    <property type="entry name" value="TMP_synthase"/>
</dbReference>
<dbReference type="NCBIfam" id="TIGR00693">
    <property type="entry name" value="thiE"/>
    <property type="match status" value="1"/>
</dbReference>
<dbReference type="PANTHER" id="PTHR20857:SF23">
    <property type="entry name" value="THIAMINE BIOSYNTHETIC BIFUNCTIONAL ENZYME"/>
    <property type="match status" value="1"/>
</dbReference>
<dbReference type="PANTHER" id="PTHR20857">
    <property type="entry name" value="THIAMINE-PHOSPHATE PYROPHOSPHORYLASE"/>
    <property type="match status" value="1"/>
</dbReference>
<dbReference type="Pfam" id="PF02581">
    <property type="entry name" value="TMP-TENI"/>
    <property type="match status" value="1"/>
</dbReference>
<dbReference type="SUPFAM" id="SSF51391">
    <property type="entry name" value="Thiamin phosphate synthase"/>
    <property type="match status" value="1"/>
</dbReference>
<protein>
    <recommendedName>
        <fullName evidence="1">Thiamine-phosphate synthase</fullName>
        <shortName evidence="1">TP synthase</shortName>
        <shortName evidence="1">TPS</shortName>
        <ecNumber evidence="1">2.5.1.3</ecNumber>
    </recommendedName>
    <alternativeName>
        <fullName evidence="1">Thiamine-phosphate pyrophosphorylase</fullName>
        <shortName evidence="1">TMP pyrophosphorylase</shortName>
        <shortName evidence="1">TMP-PPase</shortName>
    </alternativeName>
</protein>
<name>THIE_COPPD</name>
<evidence type="ECO:0000255" key="1">
    <source>
        <dbReference type="HAMAP-Rule" id="MF_00097"/>
    </source>
</evidence>
<keyword id="KW-0460">Magnesium</keyword>
<keyword id="KW-0479">Metal-binding</keyword>
<keyword id="KW-1185">Reference proteome</keyword>
<keyword id="KW-0784">Thiamine biosynthesis</keyword>
<keyword id="KW-0808">Transferase</keyword>